<comment type="function">
    <text evidence="1">Key component of the proton channel; it plays a direct role in the translocation of protons across the membrane.</text>
</comment>
<comment type="subunit">
    <text evidence="1">F-type ATPases have 2 components, CF(1) - the catalytic core - and CF(0) - the membrane proton channel. CF(1) has five subunits: alpha(3), beta(3), gamma(1), delta(1), epsilon(1). CF(0) has four main subunits: a, b, b' and c.</text>
</comment>
<comment type="subcellular location">
    <subcellularLocation>
        <location evidence="1">Plastid</location>
        <location evidence="1">Chloroplast thylakoid membrane</location>
        <topology evidence="1">Multi-pass membrane protein</topology>
    </subcellularLocation>
</comment>
<comment type="similarity">
    <text evidence="1">Belongs to the ATPase A chain family.</text>
</comment>
<protein>
    <recommendedName>
        <fullName evidence="1">ATP synthase subunit a, chloroplastic</fullName>
    </recommendedName>
    <alternativeName>
        <fullName evidence="1">ATP synthase F0 sector subunit a</fullName>
    </alternativeName>
    <alternativeName>
        <fullName evidence="1">F-ATPase subunit IV</fullName>
    </alternativeName>
</protein>
<evidence type="ECO:0000255" key="1">
    <source>
        <dbReference type="HAMAP-Rule" id="MF_01393"/>
    </source>
</evidence>
<proteinExistence type="inferred from homology"/>
<keyword id="KW-0066">ATP synthesis</keyword>
<keyword id="KW-0138">CF(0)</keyword>
<keyword id="KW-0150">Chloroplast</keyword>
<keyword id="KW-0375">Hydrogen ion transport</keyword>
<keyword id="KW-0406">Ion transport</keyword>
<keyword id="KW-0472">Membrane</keyword>
<keyword id="KW-0934">Plastid</keyword>
<keyword id="KW-1185">Reference proteome</keyword>
<keyword id="KW-0793">Thylakoid</keyword>
<keyword id="KW-0812">Transmembrane</keyword>
<keyword id="KW-1133">Transmembrane helix</keyword>
<keyword id="KW-0813">Transport</keyword>
<dbReference type="EMBL" id="EF044213">
    <property type="protein sequence ID" value="ABJ89667.1"/>
    <property type="molecule type" value="Genomic_DNA"/>
</dbReference>
<dbReference type="RefSeq" id="YP_817470.1">
    <property type="nucleotide sequence ID" value="NC_008535.1"/>
</dbReference>
<dbReference type="SMR" id="A0A323"/>
<dbReference type="GeneID" id="4421787"/>
<dbReference type="OrthoDB" id="2303at2759"/>
<dbReference type="Proteomes" id="UP000515148">
    <property type="component" value="Chloroplast Pltd"/>
</dbReference>
<dbReference type="GO" id="GO:0009535">
    <property type="term" value="C:chloroplast thylakoid membrane"/>
    <property type="evidence" value="ECO:0007669"/>
    <property type="project" value="UniProtKB-SubCell"/>
</dbReference>
<dbReference type="GO" id="GO:0005886">
    <property type="term" value="C:plasma membrane"/>
    <property type="evidence" value="ECO:0007669"/>
    <property type="project" value="UniProtKB-UniRule"/>
</dbReference>
<dbReference type="GO" id="GO:0045259">
    <property type="term" value="C:proton-transporting ATP synthase complex"/>
    <property type="evidence" value="ECO:0007669"/>
    <property type="project" value="UniProtKB-KW"/>
</dbReference>
<dbReference type="GO" id="GO:0046933">
    <property type="term" value="F:proton-transporting ATP synthase activity, rotational mechanism"/>
    <property type="evidence" value="ECO:0007669"/>
    <property type="project" value="UniProtKB-UniRule"/>
</dbReference>
<dbReference type="CDD" id="cd00310">
    <property type="entry name" value="ATP-synt_Fo_a_6"/>
    <property type="match status" value="1"/>
</dbReference>
<dbReference type="FunFam" id="1.20.120.220:FF:000001">
    <property type="entry name" value="ATP synthase subunit a, chloroplastic"/>
    <property type="match status" value="1"/>
</dbReference>
<dbReference type="Gene3D" id="1.20.120.220">
    <property type="entry name" value="ATP synthase, F0 complex, subunit A"/>
    <property type="match status" value="1"/>
</dbReference>
<dbReference type="HAMAP" id="MF_01393">
    <property type="entry name" value="ATP_synth_a_bact"/>
    <property type="match status" value="1"/>
</dbReference>
<dbReference type="InterPro" id="IPR045082">
    <property type="entry name" value="ATP_syn_F0_a_bact/chloroplast"/>
</dbReference>
<dbReference type="InterPro" id="IPR000568">
    <property type="entry name" value="ATP_synth_F0_asu"/>
</dbReference>
<dbReference type="InterPro" id="IPR023011">
    <property type="entry name" value="ATP_synth_F0_asu_AS"/>
</dbReference>
<dbReference type="InterPro" id="IPR035908">
    <property type="entry name" value="F0_ATP_A_sf"/>
</dbReference>
<dbReference type="NCBIfam" id="TIGR01131">
    <property type="entry name" value="ATP_synt_6_or_A"/>
    <property type="match status" value="1"/>
</dbReference>
<dbReference type="PANTHER" id="PTHR42823">
    <property type="entry name" value="ATP SYNTHASE SUBUNIT A, CHLOROPLASTIC"/>
    <property type="match status" value="1"/>
</dbReference>
<dbReference type="PANTHER" id="PTHR42823:SF3">
    <property type="entry name" value="ATP SYNTHASE SUBUNIT A, CHLOROPLASTIC"/>
    <property type="match status" value="1"/>
</dbReference>
<dbReference type="Pfam" id="PF00119">
    <property type="entry name" value="ATP-synt_A"/>
    <property type="match status" value="1"/>
</dbReference>
<dbReference type="PRINTS" id="PR00123">
    <property type="entry name" value="ATPASEA"/>
</dbReference>
<dbReference type="SUPFAM" id="SSF81336">
    <property type="entry name" value="F1F0 ATP synthase subunit A"/>
    <property type="match status" value="1"/>
</dbReference>
<dbReference type="PROSITE" id="PS00449">
    <property type="entry name" value="ATPASE_A"/>
    <property type="match status" value="1"/>
</dbReference>
<reference key="1">
    <citation type="journal article" date="2007" name="Plant Biotechnol. J.">
        <title>The complete nucleotide sequence of the coffee (Coffea arabica L.) chloroplast genome: organization and implications for biotechnology and phylogenetic relationships amongst angiosperms.</title>
        <authorList>
            <person name="Samson N."/>
            <person name="Bausher M.G."/>
            <person name="Lee S.-B."/>
            <person name="Jansen R.K."/>
            <person name="Daniell H."/>
        </authorList>
    </citation>
    <scope>NUCLEOTIDE SEQUENCE [LARGE SCALE GENOMIC DNA]</scope>
</reference>
<accession>A0A323</accession>
<sequence length="244" mass="26686">MNVLANTLKGLYDVSGVEVGQHFYWQIGGFQVHGQVLITSWVVIAILLGSAAIAVRDPQTIPTGGQNFFEYVLEFIRDVSKTQIGEEYGPWVPFIGTLFLFIFVSNWSGALLPWKIIQLPHGELAAPTNDINTTVALALLTSVAYFYAGITKKGLSYFGKYIQPTPILLPINILEDFTKPLSLSFRLFGNILADELVVVVLVSLVPLVVPIPVMFLGLFTSGIQALIFATLAAAYIGESMEGHH</sequence>
<geneLocation type="chloroplast"/>
<organism>
    <name type="scientific">Coffea arabica</name>
    <name type="common">Arabian coffee</name>
    <dbReference type="NCBI Taxonomy" id="13443"/>
    <lineage>
        <taxon>Eukaryota</taxon>
        <taxon>Viridiplantae</taxon>
        <taxon>Streptophyta</taxon>
        <taxon>Embryophyta</taxon>
        <taxon>Tracheophyta</taxon>
        <taxon>Spermatophyta</taxon>
        <taxon>Magnoliopsida</taxon>
        <taxon>eudicotyledons</taxon>
        <taxon>Gunneridae</taxon>
        <taxon>Pentapetalae</taxon>
        <taxon>asterids</taxon>
        <taxon>lamiids</taxon>
        <taxon>Gentianales</taxon>
        <taxon>Rubiaceae</taxon>
        <taxon>Ixoroideae</taxon>
        <taxon>Gardenieae complex</taxon>
        <taxon>Bertiereae - Coffeeae clade</taxon>
        <taxon>Coffeeae</taxon>
        <taxon>Coffea</taxon>
    </lineage>
</organism>
<name>ATPI_COFAR</name>
<gene>
    <name evidence="1" type="primary">atpI</name>
</gene>
<feature type="chain" id="PRO_0000362544" description="ATP synthase subunit a, chloroplastic">
    <location>
        <begin position="1"/>
        <end position="244"/>
    </location>
</feature>
<feature type="transmembrane region" description="Helical" evidence="1">
    <location>
        <begin position="35"/>
        <end position="55"/>
    </location>
</feature>
<feature type="transmembrane region" description="Helical" evidence="1">
    <location>
        <begin position="92"/>
        <end position="112"/>
    </location>
</feature>
<feature type="transmembrane region" description="Helical" evidence="1">
    <location>
        <begin position="131"/>
        <end position="151"/>
    </location>
</feature>
<feature type="transmembrane region" description="Helical" evidence="1">
    <location>
        <begin position="196"/>
        <end position="216"/>
    </location>
</feature>
<feature type="transmembrane region" description="Helical" evidence="1">
    <location>
        <begin position="217"/>
        <end position="237"/>
    </location>
</feature>